<accession>C3L9F4</accession>
<comment type="function">
    <text evidence="1">GTPase that plays an essential role in the late steps of ribosome biogenesis.</text>
</comment>
<comment type="subunit">
    <text evidence="1">Associates with the 50S ribosomal subunit.</text>
</comment>
<comment type="similarity">
    <text evidence="1">Belongs to the TRAFAC class TrmE-Era-EngA-EngB-Septin-like GTPase superfamily. EngA (Der) GTPase family.</text>
</comment>
<sequence length="436" mass="48618">MPKPVIAIVGRPNVGKSTIFNRIVGERVSIVEDIPGVTRDRIYSAGEWLNHEFNIIDTGGIDIGDEPFLTQIRQQAEVAIDEADVIIFMTNGRDGVTAADEEVAKILYRSNKPVVLAVNKVDNPEMRSDIYDFYALGFGEPFPISGTHGLGLGDLLDEAAQHFPKIEEDGYDEDTIRFSLIGRPNVGKSSLVNALLGQERVIVSNVAGTTRDAVDTPYSKDGKDYVIIDTAGMRKKGKVYESTEKYSVLRALRAIERSDVVLVVLDGEEGIIEQDKKIAGYAHDSGRAVVIVVNKWDAVKKDEKTMKAFEENIRAHFQFLEYAPIVFLSAKTRKRTQTLIPVIDEVNESHSIRIQTNVLNDVIMDAVAMNPTPTHNGSRLKIFYATQVAVKPPTFVVFVNDPELLHFSYERFLKNRLRESFGFVGTPIHIIARARD</sequence>
<keyword id="KW-0342">GTP-binding</keyword>
<keyword id="KW-0547">Nucleotide-binding</keyword>
<keyword id="KW-0677">Repeat</keyword>
<keyword id="KW-0690">Ribosome biogenesis</keyword>
<organism>
    <name type="scientific">Bacillus anthracis (strain CDC 684 / NRRL 3495)</name>
    <dbReference type="NCBI Taxonomy" id="568206"/>
    <lineage>
        <taxon>Bacteria</taxon>
        <taxon>Bacillati</taxon>
        <taxon>Bacillota</taxon>
        <taxon>Bacilli</taxon>
        <taxon>Bacillales</taxon>
        <taxon>Bacillaceae</taxon>
        <taxon>Bacillus</taxon>
        <taxon>Bacillus cereus group</taxon>
    </lineage>
</organism>
<protein>
    <recommendedName>
        <fullName evidence="1">GTPase Der</fullName>
    </recommendedName>
    <alternativeName>
        <fullName evidence="1">GTP-binding protein EngA</fullName>
    </alternativeName>
</protein>
<evidence type="ECO:0000255" key="1">
    <source>
        <dbReference type="HAMAP-Rule" id="MF_00195"/>
    </source>
</evidence>
<gene>
    <name evidence="1" type="primary">der</name>
    <name type="synonym">engA</name>
    <name type="ordered locus">BAMEG_3068</name>
</gene>
<dbReference type="EMBL" id="CP001215">
    <property type="protein sequence ID" value="ACP13803.1"/>
    <property type="molecule type" value="Genomic_DNA"/>
</dbReference>
<dbReference type="RefSeq" id="WP_001125893.1">
    <property type="nucleotide sequence ID" value="NC_012581.1"/>
</dbReference>
<dbReference type="SMR" id="C3L9F4"/>
<dbReference type="GeneID" id="93009536"/>
<dbReference type="KEGG" id="bah:BAMEG_3068"/>
<dbReference type="HOGENOM" id="CLU_016077_6_2_9"/>
<dbReference type="GO" id="GO:0005525">
    <property type="term" value="F:GTP binding"/>
    <property type="evidence" value="ECO:0007669"/>
    <property type="project" value="UniProtKB-UniRule"/>
</dbReference>
<dbReference type="GO" id="GO:0043022">
    <property type="term" value="F:ribosome binding"/>
    <property type="evidence" value="ECO:0007669"/>
    <property type="project" value="TreeGrafter"/>
</dbReference>
<dbReference type="GO" id="GO:0042254">
    <property type="term" value="P:ribosome biogenesis"/>
    <property type="evidence" value="ECO:0007669"/>
    <property type="project" value="UniProtKB-KW"/>
</dbReference>
<dbReference type="CDD" id="cd01894">
    <property type="entry name" value="EngA1"/>
    <property type="match status" value="1"/>
</dbReference>
<dbReference type="CDD" id="cd01895">
    <property type="entry name" value="EngA2"/>
    <property type="match status" value="1"/>
</dbReference>
<dbReference type="FunFam" id="3.30.300.20:FF:000004">
    <property type="entry name" value="GTPase Der"/>
    <property type="match status" value="1"/>
</dbReference>
<dbReference type="FunFam" id="3.40.50.300:FF:000040">
    <property type="entry name" value="GTPase Der"/>
    <property type="match status" value="1"/>
</dbReference>
<dbReference type="FunFam" id="3.40.50.300:FF:000057">
    <property type="entry name" value="GTPase Der"/>
    <property type="match status" value="1"/>
</dbReference>
<dbReference type="Gene3D" id="3.30.300.20">
    <property type="match status" value="1"/>
</dbReference>
<dbReference type="Gene3D" id="3.40.50.300">
    <property type="entry name" value="P-loop containing nucleotide triphosphate hydrolases"/>
    <property type="match status" value="2"/>
</dbReference>
<dbReference type="HAMAP" id="MF_00195">
    <property type="entry name" value="GTPase_Der"/>
    <property type="match status" value="1"/>
</dbReference>
<dbReference type="InterPro" id="IPR031166">
    <property type="entry name" value="G_ENGA"/>
</dbReference>
<dbReference type="InterPro" id="IPR006073">
    <property type="entry name" value="GTP-bd"/>
</dbReference>
<dbReference type="InterPro" id="IPR016484">
    <property type="entry name" value="GTPase_Der"/>
</dbReference>
<dbReference type="InterPro" id="IPR032859">
    <property type="entry name" value="KH_dom-like"/>
</dbReference>
<dbReference type="InterPro" id="IPR015946">
    <property type="entry name" value="KH_dom-like_a/b"/>
</dbReference>
<dbReference type="InterPro" id="IPR027417">
    <property type="entry name" value="P-loop_NTPase"/>
</dbReference>
<dbReference type="InterPro" id="IPR005225">
    <property type="entry name" value="Small_GTP-bd"/>
</dbReference>
<dbReference type="NCBIfam" id="TIGR03594">
    <property type="entry name" value="GTPase_EngA"/>
    <property type="match status" value="1"/>
</dbReference>
<dbReference type="NCBIfam" id="TIGR00231">
    <property type="entry name" value="small_GTP"/>
    <property type="match status" value="2"/>
</dbReference>
<dbReference type="PANTHER" id="PTHR43834">
    <property type="entry name" value="GTPASE DER"/>
    <property type="match status" value="1"/>
</dbReference>
<dbReference type="PANTHER" id="PTHR43834:SF6">
    <property type="entry name" value="GTPASE DER"/>
    <property type="match status" value="1"/>
</dbReference>
<dbReference type="Pfam" id="PF14714">
    <property type="entry name" value="KH_dom-like"/>
    <property type="match status" value="1"/>
</dbReference>
<dbReference type="Pfam" id="PF01926">
    <property type="entry name" value="MMR_HSR1"/>
    <property type="match status" value="2"/>
</dbReference>
<dbReference type="PIRSF" id="PIRSF006485">
    <property type="entry name" value="GTP-binding_EngA"/>
    <property type="match status" value="1"/>
</dbReference>
<dbReference type="PRINTS" id="PR00326">
    <property type="entry name" value="GTP1OBG"/>
</dbReference>
<dbReference type="SUPFAM" id="SSF52540">
    <property type="entry name" value="P-loop containing nucleoside triphosphate hydrolases"/>
    <property type="match status" value="2"/>
</dbReference>
<dbReference type="PROSITE" id="PS51712">
    <property type="entry name" value="G_ENGA"/>
    <property type="match status" value="2"/>
</dbReference>
<name>DER_BACAC</name>
<proteinExistence type="inferred from homology"/>
<reference key="1">
    <citation type="submission" date="2008-10" db="EMBL/GenBank/DDBJ databases">
        <title>Genome sequence of Bacillus anthracis str. CDC 684.</title>
        <authorList>
            <person name="Dodson R.J."/>
            <person name="Munk A.C."/>
            <person name="Brettin T."/>
            <person name="Bruce D."/>
            <person name="Detter C."/>
            <person name="Tapia R."/>
            <person name="Han C."/>
            <person name="Sutton G."/>
            <person name="Sims D."/>
        </authorList>
    </citation>
    <scope>NUCLEOTIDE SEQUENCE [LARGE SCALE GENOMIC DNA]</scope>
    <source>
        <strain>CDC 684 / NRRL 3495</strain>
    </source>
</reference>
<feature type="chain" id="PRO_1000124340" description="GTPase Der">
    <location>
        <begin position="1"/>
        <end position="436"/>
    </location>
</feature>
<feature type="domain" description="EngA-type G 1">
    <location>
        <begin position="4"/>
        <end position="167"/>
    </location>
</feature>
<feature type="domain" description="EngA-type G 2">
    <location>
        <begin position="176"/>
        <end position="351"/>
    </location>
</feature>
<feature type="domain" description="KH-like" evidence="1">
    <location>
        <begin position="352"/>
        <end position="436"/>
    </location>
</feature>
<feature type="binding site" evidence="1">
    <location>
        <begin position="10"/>
        <end position="17"/>
    </location>
    <ligand>
        <name>GTP</name>
        <dbReference type="ChEBI" id="CHEBI:37565"/>
        <label>1</label>
    </ligand>
</feature>
<feature type="binding site" evidence="1">
    <location>
        <begin position="57"/>
        <end position="61"/>
    </location>
    <ligand>
        <name>GTP</name>
        <dbReference type="ChEBI" id="CHEBI:37565"/>
        <label>1</label>
    </ligand>
</feature>
<feature type="binding site" evidence="1">
    <location>
        <begin position="119"/>
        <end position="122"/>
    </location>
    <ligand>
        <name>GTP</name>
        <dbReference type="ChEBI" id="CHEBI:37565"/>
        <label>1</label>
    </ligand>
</feature>
<feature type="binding site" evidence="1">
    <location>
        <begin position="182"/>
        <end position="189"/>
    </location>
    <ligand>
        <name>GTP</name>
        <dbReference type="ChEBI" id="CHEBI:37565"/>
        <label>2</label>
    </ligand>
</feature>
<feature type="binding site" evidence="1">
    <location>
        <begin position="229"/>
        <end position="233"/>
    </location>
    <ligand>
        <name>GTP</name>
        <dbReference type="ChEBI" id="CHEBI:37565"/>
        <label>2</label>
    </ligand>
</feature>
<feature type="binding site" evidence="1">
    <location>
        <begin position="294"/>
        <end position="297"/>
    </location>
    <ligand>
        <name>GTP</name>
        <dbReference type="ChEBI" id="CHEBI:37565"/>
        <label>2</label>
    </ligand>
</feature>